<accession>Q9TKW1</accession>
<evidence type="ECO:0000255" key="1">
    <source>
        <dbReference type="HAMAP-Rule" id="MF_00482"/>
    </source>
</evidence>
<gene>
    <name evidence="1" type="primary">psaB</name>
</gene>
<feature type="chain" id="PRO_0000088623" description="Photosystem I P700 chlorophyll a apoprotein A2">
    <location>
        <begin position="1"/>
        <end position="734"/>
    </location>
</feature>
<feature type="transmembrane region" description="Helical; Name=I" evidence="1">
    <location>
        <begin position="46"/>
        <end position="69"/>
    </location>
</feature>
<feature type="transmembrane region" description="Helical; Name=II" evidence="1">
    <location>
        <begin position="135"/>
        <end position="158"/>
    </location>
</feature>
<feature type="transmembrane region" description="Helical; Name=III" evidence="1">
    <location>
        <begin position="175"/>
        <end position="199"/>
    </location>
</feature>
<feature type="transmembrane region" description="Helical; Name=IV" evidence="1">
    <location>
        <begin position="273"/>
        <end position="291"/>
    </location>
</feature>
<feature type="transmembrane region" description="Helical; Name=V" evidence="1">
    <location>
        <begin position="330"/>
        <end position="353"/>
    </location>
</feature>
<feature type="transmembrane region" description="Helical; Name=VI" evidence="1">
    <location>
        <begin position="369"/>
        <end position="395"/>
    </location>
</feature>
<feature type="transmembrane region" description="Helical; Name=VII" evidence="1">
    <location>
        <begin position="417"/>
        <end position="439"/>
    </location>
</feature>
<feature type="transmembrane region" description="Helical; Name=VIII" evidence="1">
    <location>
        <begin position="517"/>
        <end position="535"/>
    </location>
</feature>
<feature type="transmembrane region" description="Helical; Name=IX" evidence="1">
    <location>
        <begin position="575"/>
        <end position="596"/>
    </location>
</feature>
<feature type="transmembrane region" description="Helical; Name=X" evidence="1">
    <location>
        <begin position="643"/>
        <end position="665"/>
    </location>
</feature>
<feature type="transmembrane region" description="Helical; Name=XI" evidence="1">
    <location>
        <begin position="707"/>
        <end position="727"/>
    </location>
</feature>
<feature type="binding site" evidence="1">
    <location>
        <position position="559"/>
    </location>
    <ligand>
        <name>[4Fe-4S] cluster</name>
        <dbReference type="ChEBI" id="CHEBI:49883"/>
        <note>ligand shared between dimeric partners</note>
    </ligand>
</feature>
<feature type="binding site" evidence="1">
    <location>
        <position position="568"/>
    </location>
    <ligand>
        <name>[4Fe-4S] cluster</name>
        <dbReference type="ChEBI" id="CHEBI:49883"/>
        <note>ligand shared between dimeric partners</note>
    </ligand>
</feature>
<feature type="binding site" description="axial binding residue" evidence="1">
    <location>
        <position position="654"/>
    </location>
    <ligand>
        <name>chlorophyll a</name>
        <dbReference type="ChEBI" id="CHEBI:58416"/>
        <label>B1</label>
    </ligand>
    <ligandPart>
        <name>Mg</name>
        <dbReference type="ChEBI" id="CHEBI:25107"/>
    </ligandPart>
</feature>
<feature type="binding site" description="axial binding residue" evidence="1">
    <location>
        <position position="662"/>
    </location>
    <ligand>
        <name>chlorophyll a</name>
        <dbReference type="ChEBI" id="CHEBI:58416"/>
        <label>B3</label>
    </ligand>
    <ligandPart>
        <name>Mg</name>
        <dbReference type="ChEBI" id="CHEBI:25107"/>
    </ligandPart>
</feature>
<feature type="binding site" evidence="1">
    <location>
        <position position="670"/>
    </location>
    <ligand>
        <name>chlorophyll a</name>
        <dbReference type="ChEBI" id="CHEBI:58416"/>
        <label>B3</label>
    </ligand>
</feature>
<feature type="binding site" evidence="1">
    <location>
        <position position="671"/>
    </location>
    <ligand>
        <name>phylloquinone</name>
        <dbReference type="ChEBI" id="CHEBI:18067"/>
        <label>B</label>
    </ligand>
</feature>
<geneLocation type="chloroplast"/>
<dbReference type="EC" id="1.97.1.12" evidence="1"/>
<dbReference type="EMBL" id="AF137379">
    <property type="protein sequence ID" value="AAD54855.1"/>
    <property type="molecule type" value="Genomic_DNA"/>
</dbReference>
<dbReference type="RefSeq" id="NP_050884.1">
    <property type="nucleotide sequence ID" value="NC_000927.1"/>
</dbReference>
<dbReference type="SMR" id="Q9TKW1"/>
<dbReference type="GeneID" id="802034"/>
<dbReference type="GO" id="GO:0009535">
    <property type="term" value="C:chloroplast thylakoid membrane"/>
    <property type="evidence" value="ECO:0007669"/>
    <property type="project" value="UniProtKB-SubCell"/>
</dbReference>
<dbReference type="GO" id="GO:0009522">
    <property type="term" value="C:photosystem I"/>
    <property type="evidence" value="ECO:0007669"/>
    <property type="project" value="UniProtKB-KW"/>
</dbReference>
<dbReference type="GO" id="GO:0051539">
    <property type="term" value="F:4 iron, 4 sulfur cluster binding"/>
    <property type="evidence" value="ECO:0007669"/>
    <property type="project" value="UniProtKB-KW"/>
</dbReference>
<dbReference type="GO" id="GO:0016168">
    <property type="term" value="F:chlorophyll binding"/>
    <property type="evidence" value="ECO:0007669"/>
    <property type="project" value="UniProtKB-KW"/>
</dbReference>
<dbReference type="GO" id="GO:0009055">
    <property type="term" value="F:electron transfer activity"/>
    <property type="evidence" value="ECO:0007669"/>
    <property type="project" value="UniProtKB-UniRule"/>
</dbReference>
<dbReference type="GO" id="GO:0000287">
    <property type="term" value="F:magnesium ion binding"/>
    <property type="evidence" value="ECO:0007669"/>
    <property type="project" value="UniProtKB-UniRule"/>
</dbReference>
<dbReference type="GO" id="GO:0016491">
    <property type="term" value="F:oxidoreductase activity"/>
    <property type="evidence" value="ECO:0007669"/>
    <property type="project" value="UniProtKB-KW"/>
</dbReference>
<dbReference type="GO" id="GO:0015979">
    <property type="term" value="P:photosynthesis"/>
    <property type="evidence" value="ECO:0007669"/>
    <property type="project" value="UniProtKB-UniRule"/>
</dbReference>
<dbReference type="FunFam" id="1.20.1130.10:FF:000001">
    <property type="entry name" value="Photosystem I P700 chlorophyll a apoprotein A2"/>
    <property type="match status" value="1"/>
</dbReference>
<dbReference type="Gene3D" id="1.20.1130.10">
    <property type="entry name" value="Photosystem I PsaA/PsaB"/>
    <property type="match status" value="1"/>
</dbReference>
<dbReference type="HAMAP" id="MF_00482">
    <property type="entry name" value="PSI_PsaB"/>
    <property type="match status" value="1"/>
</dbReference>
<dbReference type="InterPro" id="IPR001280">
    <property type="entry name" value="PSI_PsaA/B"/>
</dbReference>
<dbReference type="InterPro" id="IPR020586">
    <property type="entry name" value="PSI_PsaA/B_CS"/>
</dbReference>
<dbReference type="InterPro" id="IPR036408">
    <property type="entry name" value="PSI_PsaA/B_sf"/>
</dbReference>
<dbReference type="InterPro" id="IPR006244">
    <property type="entry name" value="PSI_PsaB"/>
</dbReference>
<dbReference type="NCBIfam" id="TIGR01336">
    <property type="entry name" value="psaB"/>
    <property type="match status" value="1"/>
</dbReference>
<dbReference type="PANTHER" id="PTHR30128">
    <property type="entry name" value="OUTER MEMBRANE PROTEIN, OMPA-RELATED"/>
    <property type="match status" value="1"/>
</dbReference>
<dbReference type="PANTHER" id="PTHR30128:SF19">
    <property type="entry name" value="PHOTOSYSTEM I P700 CHLOROPHYLL A APOPROTEIN A1-RELATED"/>
    <property type="match status" value="1"/>
</dbReference>
<dbReference type="Pfam" id="PF00223">
    <property type="entry name" value="PsaA_PsaB"/>
    <property type="match status" value="1"/>
</dbReference>
<dbReference type="PIRSF" id="PIRSF002905">
    <property type="entry name" value="PSI_A"/>
    <property type="match status" value="1"/>
</dbReference>
<dbReference type="PRINTS" id="PR00257">
    <property type="entry name" value="PHOTSYSPSAAB"/>
</dbReference>
<dbReference type="SUPFAM" id="SSF81558">
    <property type="entry name" value="Photosystem I subunits PsaA/PsaB"/>
    <property type="match status" value="1"/>
</dbReference>
<dbReference type="PROSITE" id="PS00419">
    <property type="entry name" value="PHOTOSYSTEM_I_PSAAB"/>
    <property type="match status" value="1"/>
</dbReference>
<sequence length="734" mass="81748">MATKFPKFSQGLAEDPTTRRIWYGIATAHDFESHDGMTEESLYQKIFASHFGQLAIIFLWTSGNLFHVAWQGNFEQWGQDPLHVRPIAHAIWDPHFGQPAVEAFTRGGAAGPVNISYSGVYQWWYTIGMRSSNDLYTGALFLLVGAAILLFAGWLHLQPKFQPSLSWFKNAESRLNHHLAGLFGVSSLAWTGHLVHVAIPESRGQHVGWDNFLTTLPHPAGLAPFFNGNWSVYAQNPDSASHLFGTSTGAGTAILTFLGGFHPQTQSLWLTDMAHHHLAIAVVFILAGHMYRTNFGIGHSMREILEAHRAPSGRLGLGHKGLFDTVNNSLHFQLGLALASLGVITSLVAQHMYSLPPYAFMAQDFTTMSALYTHHQYIAGFIMTGAFAHGAIFFIRDYDPIQNEGNVLARMLEHKEALISHLSWVTLFLGFHTLGLYVHNDVMLAFGTPEKQILIEPVFAQWIQASHGKALYGFDVLLSSADSPATSASQSIWLPGWLDAINSSSNSLFLTIGPGDFLVHHAIALGLHTTTLILVKGALDARGSKLMPDKKDFGYSFPCDGPGRGGTCDISAWDAFYLAVFWMLNTIGWTTFYWHWKHLALWQGNAAQFNESSTYLMGWLRDYLWLNSSQLINGYNPFGMNSLSVWAWMFLFGHLVWATGFMFLISWRGYWQELIETLAWAHERTPLANLVRWKDKPVALSIVQARLVGLAHFSVGYVFTYAAFVIASTSGKFG</sequence>
<reference key="1">
    <citation type="journal article" date="1999" name="Proc. Natl. Acad. Sci. U.S.A.">
        <title>The complete chloroplast DNA sequence of the green alga Nephroselmis olivacea: insights into the architecture of ancestral chloroplast genomes.</title>
        <authorList>
            <person name="Turmel M."/>
            <person name="Otis C."/>
            <person name="Lemieux C."/>
        </authorList>
    </citation>
    <scope>NUCLEOTIDE SEQUENCE [LARGE SCALE GENOMIC DNA]</scope>
    <source>
        <strain>NIES-484 / S-N-5-8</strain>
    </source>
</reference>
<comment type="function">
    <text evidence="1">PsaA and PsaB bind P700, the primary electron donor of photosystem I (PSI), as well as the electron acceptors A0, A1 and FX. PSI is a plastocyanin/cytochrome c6-ferredoxin oxidoreductase, converting photonic excitation into a charge separation, which transfers an electron from the donor P700 chlorophyll pair to the spectroscopically characterized acceptors A0, A1, FX, FA and FB in turn. Oxidized P700 is reduced on the lumenal side of the thylakoid membrane by plastocyanin or cytochrome c6.</text>
</comment>
<comment type="catalytic activity">
    <reaction evidence="1">
        <text>reduced [plastocyanin] + hnu + oxidized [2Fe-2S]-[ferredoxin] = oxidized [plastocyanin] + reduced [2Fe-2S]-[ferredoxin]</text>
        <dbReference type="Rhea" id="RHEA:30407"/>
        <dbReference type="Rhea" id="RHEA-COMP:10000"/>
        <dbReference type="Rhea" id="RHEA-COMP:10001"/>
        <dbReference type="Rhea" id="RHEA-COMP:10039"/>
        <dbReference type="Rhea" id="RHEA-COMP:10040"/>
        <dbReference type="ChEBI" id="CHEBI:29036"/>
        <dbReference type="ChEBI" id="CHEBI:30212"/>
        <dbReference type="ChEBI" id="CHEBI:33737"/>
        <dbReference type="ChEBI" id="CHEBI:33738"/>
        <dbReference type="ChEBI" id="CHEBI:49552"/>
        <dbReference type="EC" id="1.97.1.12"/>
    </reaction>
</comment>
<comment type="cofactor">
    <text evidence="1">P700 is a chlorophyll a/chlorophyll a' dimer, A0 is one or more chlorophyll a, A1 is one or both phylloquinones and FX is a shared 4Fe-4S iron-sulfur center.</text>
</comment>
<comment type="subunit">
    <text evidence="1">The PsaA/B heterodimer binds the P700 chlorophyll special pair and subsequent electron acceptors. PSI consists of a core antenna complex that captures photons, and an electron transfer chain that converts photonic excitation into a charge separation. The eukaryotic PSI reaction center is composed of at least 11 subunits.</text>
</comment>
<comment type="subcellular location">
    <subcellularLocation>
        <location evidence="1">Plastid</location>
        <location evidence="1">Chloroplast thylakoid membrane</location>
        <topology evidence="1">Multi-pass membrane protein</topology>
    </subcellularLocation>
</comment>
<comment type="similarity">
    <text evidence="1">Belongs to the PsaA/PsaB family.</text>
</comment>
<name>PSAB_NEPOL</name>
<keyword id="KW-0004">4Fe-4S</keyword>
<keyword id="KW-0148">Chlorophyll</keyword>
<keyword id="KW-0150">Chloroplast</keyword>
<keyword id="KW-0157">Chromophore</keyword>
<keyword id="KW-0249">Electron transport</keyword>
<keyword id="KW-0408">Iron</keyword>
<keyword id="KW-0411">Iron-sulfur</keyword>
<keyword id="KW-0460">Magnesium</keyword>
<keyword id="KW-0472">Membrane</keyword>
<keyword id="KW-0479">Metal-binding</keyword>
<keyword id="KW-0560">Oxidoreductase</keyword>
<keyword id="KW-0602">Photosynthesis</keyword>
<keyword id="KW-0603">Photosystem I</keyword>
<keyword id="KW-0934">Plastid</keyword>
<keyword id="KW-0793">Thylakoid</keyword>
<keyword id="KW-0812">Transmembrane</keyword>
<keyword id="KW-1133">Transmembrane helix</keyword>
<keyword id="KW-0813">Transport</keyword>
<protein>
    <recommendedName>
        <fullName evidence="1">Photosystem I P700 chlorophyll a apoprotein A2</fullName>
        <ecNumber evidence="1">1.97.1.12</ecNumber>
    </recommendedName>
    <alternativeName>
        <fullName evidence="1">PSI-B</fullName>
    </alternativeName>
    <alternativeName>
        <fullName evidence="1">PsaB</fullName>
    </alternativeName>
</protein>
<proteinExistence type="inferred from homology"/>
<organism>
    <name type="scientific">Nephroselmis olivacea</name>
    <name type="common">Green alga</name>
    <dbReference type="NCBI Taxonomy" id="31312"/>
    <lineage>
        <taxon>Eukaryota</taxon>
        <taxon>Viridiplantae</taxon>
        <taxon>Chlorophyta</taxon>
        <taxon>Nephroselmidophyceae</taxon>
        <taxon>Nephroselmidales</taxon>
        <taxon>Nephroselmidaceae</taxon>
        <taxon>Nephroselmis</taxon>
    </lineage>
</organism>